<name>UPE26_UPEMJ</name>
<reference key="1">
    <citation type="journal article" date="1996" name="Aust. J. Chem.">
        <title>New antibiotic uperin peptides from the dorsal glands of the australian toadlet Uperoleia mjobergii.</title>
        <authorList>
            <person name="Bradford A.M."/>
            <person name="Bowie J.H."/>
            <person name="Tyler M.J."/>
            <person name="Wallace J.C."/>
        </authorList>
    </citation>
    <scope>PROTEIN SEQUENCE</scope>
    <scope>MASS SPECTROMETRY</scope>
    <source>
        <tissue>Skin secretion</tissue>
    </source>
</reference>
<protein>
    <recommendedName>
        <fullName>Uperin-2.6</fullName>
    </recommendedName>
</protein>
<proteinExistence type="evidence at protein level"/>
<organism>
    <name type="scientific">Uperoleia mjobergii</name>
    <name type="common">Mjoberg's toadlet</name>
    <name type="synonym">Pseudophryne mjobergii</name>
    <dbReference type="NCBI Taxonomy" id="104954"/>
    <lineage>
        <taxon>Eukaryota</taxon>
        <taxon>Metazoa</taxon>
        <taxon>Chordata</taxon>
        <taxon>Craniata</taxon>
        <taxon>Vertebrata</taxon>
        <taxon>Euteleostomi</taxon>
        <taxon>Amphibia</taxon>
        <taxon>Batrachia</taxon>
        <taxon>Anura</taxon>
        <taxon>Neobatrachia</taxon>
        <taxon>Myobatrachoidea</taxon>
        <taxon>Myobatrachidae</taxon>
        <taxon>Myobatrachinae</taxon>
        <taxon>Uperoleia</taxon>
    </lineage>
</organism>
<evidence type="ECO:0000269" key="1">
    <source ref="1"/>
</evidence>
<dbReference type="GO" id="GO:0005576">
    <property type="term" value="C:extracellular region"/>
    <property type="evidence" value="ECO:0007669"/>
    <property type="project" value="UniProtKB-SubCell"/>
</dbReference>
<dbReference type="GO" id="GO:0006952">
    <property type="term" value="P:defense response"/>
    <property type="evidence" value="ECO:0007669"/>
    <property type="project" value="UniProtKB-KW"/>
</dbReference>
<dbReference type="InterPro" id="IPR013157">
    <property type="entry name" value="Aurein_antimicrobial_peptide"/>
</dbReference>
<dbReference type="Pfam" id="PF08256">
    <property type="entry name" value="Antimicrobial20"/>
    <property type="match status" value="1"/>
</dbReference>
<comment type="subcellular location">
    <subcellularLocation>
        <location>Secreted</location>
    </subcellularLocation>
</comment>
<comment type="tissue specificity">
    <text>Expressed by the skin dorsal glands.</text>
</comment>
<comment type="mass spectrometry" mass="1948.0" method="FAB" evidence="1"/>
<accession>P82095</accession>
<feature type="peptide" id="PRO_0000043851" description="Uperin-2.6">
    <location>
        <begin position="1"/>
        <end position="19"/>
    </location>
</feature>
<keyword id="KW-0878">Amphibian defense peptide</keyword>
<keyword id="KW-0903">Direct protein sequencing</keyword>
<keyword id="KW-0964">Secreted</keyword>
<sequence length="19" mass="1949">GILDIAKKLVGGIRNVLGI</sequence>